<dbReference type="EMBL" id="AP009389">
    <property type="protein sequence ID" value="BAF59343.1"/>
    <property type="molecule type" value="Genomic_DNA"/>
</dbReference>
<dbReference type="SMR" id="A5D339"/>
<dbReference type="STRING" id="370438.PTH_1162"/>
<dbReference type="KEGG" id="pth:PTH_1162"/>
<dbReference type="eggNOG" id="COG0231">
    <property type="taxonomic scope" value="Bacteria"/>
</dbReference>
<dbReference type="HOGENOM" id="CLU_074944_0_1_9"/>
<dbReference type="UniPathway" id="UPA00345"/>
<dbReference type="Proteomes" id="UP000006556">
    <property type="component" value="Chromosome"/>
</dbReference>
<dbReference type="GO" id="GO:0005737">
    <property type="term" value="C:cytoplasm"/>
    <property type="evidence" value="ECO:0007669"/>
    <property type="project" value="UniProtKB-SubCell"/>
</dbReference>
<dbReference type="GO" id="GO:0003746">
    <property type="term" value="F:translation elongation factor activity"/>
    <property type="evidence" value="ECO:0007669"/>
    <property type="project" value="UniProtKB-UniRule"/>
</dbReference>
<dbReference type="GO" id="GO:0043043">
    <property type="term" value="P:peptide biosynthetic process"/>
    <property type="evidence" value="ECO:0007669"/>
    <property type="project" value="InterPro"/>
</dbReference>
<dbReference type="CDD" id="cd04470">
    <property type="entry name" value="S1_EF-P_repeat_1"/>
    <property type="match status" value="1"/>
</dbReference>
<dbReference type="CDD" id="cd05794">
    <property type="entry name" value="S1_EF-P_repeat_2"/>
    <property type="match status" value="1"/>
</dbReference>
<dbReference type="FunFam" id="2.30.30.30:FF:000003">
    <property type="entry name" value="Elongation factor P"/>
    <property type="match status" value="1"/>
</dbReference>
<dbReference type="FunFam" id="2.40.50.140:FF:000004">
    <property type="entry name" value="Elongation factor P"/>
    <property type="match status" value="1"/>
</dbReference>
<dbReference type="FunFam" id="2.40.50.140:FF:000009">
    <property type="entry name" value="Elongation factor P"/>
    <property type="match status" value="1"/>
</dbReference>
<dbReference type="Gene3D" id="2.30.30.30">
    <property type="match status" value="1"/>
</dbReference>
<dbReference type="Gene3D" id="2.40.50.140">
    <property type="entry name" value="Nucleic acid-binding proteins"/>
    <property type="match status" value="2"/>
</dbReference>
<dbReference type="HAMAP" id="MF_00141">
    <property type="entry name" value="EF_P"/>
    <property type="match status" value="1"/>
</dbReference>
<dbReference type="InterPro" id="IPR015365">
    <property type="entry name" value="Elong-fact-P_C"/>
</dbReference>
<dbReference type="InterPro" id="IPR012340">
    <property type="entry name" value="NA-bd_OB-fold"/>
</dbReference>
<dbReference type="InterPro" id="IPR014722">
    <property type="entry name" value="Rib_uL2_dom2"/>
</dbReference>
<dbReference type="InterPro" id="IPR020599">
    <property type="entry name" value="Transl_elong_fac_P/YeiP"/>
</dbReference>
<dbReference type="InterPro" id="IPR013185">
    <property type="entry name" value="Transl_elong_KOW-like"/>
</dbReference>
<dbReference type="InterPro" id="IPR001059">
    <property type="entry name" value="Transl_elong_P/YeiP_cen"/>
</dbReference>
<dbReference type="InterPro" id="IPR013852">
    <property type="entry name" value="Transl_elong_P/YeiP_CS"/>
</dbReference>
<dbReference type="InterPro" id="IPR011768">
    <property type="entry name" value="Transl_elongation_fac_P"/>
</dbReference>
<dbReference type="InterPro" id="IPR008991">
    <property type="entry name" value="Translation_prot_SH3-like_sf"/>
</dbReference>
<dbReference type="NCBIfam" id="TIGR00038">
    <property type="entry name" value="efp"/>
    <property type="match status" value="1"/>
</dbReference>
<dbReference type="NCBIfam" id="NF001810">
    <property type="entry name" value="PRK00529.1"/>
    <property type="match status" value="1"/>
</dbReference>
<dbReference type="PANTHER" id="PTHR30053">
    <property type="entry name" value="ELONGATION FACTOR P"/>
    <property type="match status" value="1"/>
</dbReference>
<dbReference type="PANTHER" id="PTHR30053:SF12">
    <property type="entry name" value="ELONGATION FACTOR P (EF-P) FAMILY PROTEIN"/>
    <property type="match status" value="1"/>
</dbReference>
<dbReference type="Pfam" id="PF01132">
    <property type="entry name" value="EFP"/>
    <property type="match status" value="1"/>
</dbReference>
<dbReference type="Pfam" id="PF08207">
    <property type="entry name" value="EFP_N"/>
    <property type="match status" value="1"/>
</dbReference>
<dbReference type="Pfam" id="PF09285">
    <property type="entry name" value="Elong-fact-P_C"/>
    <property type="match status" value="1"/>
</dbReference>
<dbReference type="PIRSF" id="PIRSF005901">
    <property type="entry name" value="EF-P"/>
    <property type="match status" value="1"/>
</dbReference>
<dbReference type="SMART" id="SM01185">
    <property type="entry name" value="EFP"/>
    <property type="match status" value="1"/>
</dbReference>
<dbReference type="SMART" id="SM00841">
    <property type="entry name" value="Elong-fact-P_C"/>
    <property type="match status" value="1"/>
</dbReference>
<dbReference type="SUPFAM" id="SSF50249">
    <property type="entry name" value="Nucleic acid-binding proteins"/>
    <property type="match status" value="2"/>
</dbReference>
<dbReference type="SUPFAM" id="SSF50104">
    <property type="entry name" value="Translation proteins SH3-like domain"/>
    <property type="match status" value="1"/>
</dbReference>
<dbReference type="PROSITE" id="PS01275">
    <property type="entry name" value="EFP"/>
    <property type="match status" value="1"/>
</dbReference>
<feature type="chain" id="PRO_1000076522" description="Elongation factor P">
    <location>
        <begin position="1"/>
        <end position="185"/>
    </location>
</feature>
<protein>
    <recommendedName>
        <fullName evidence="1">Elongation factor P</fullName>
        <shortName evidence="1">EF-P</shortName>
    </recommendedName>
</protein>
<name>EFP_PELTS</name>
<comment type="function">
    <text evidence="1">Involved in peptide bond synthesis. Stimulates efficient translation and peptide-bond synthesis on native or reconstituted 70S ribosomes in vitro. Probably functions indirectly by altering the affinity of the ribosome for aminoacyl-tRNA, thus increasing their reactivity as acceptors for peptidyl transferase.</text>
</comment>
<comment type="pathway">
    <text evidence="1">Protein biosynthesis; polypeptide chain elongation.</text>
</comment>
<comment type="subcellular location">
    <subcellularLocation>
        <location evidence="1">Cytoplasm</location>
    </subcellularLocation>
</comment>
<comment type="similarity">
    <text evidence="1">Belongs to the elongation factor P family.</text>
</comment>
<gene>
    <name evidence="1" type="primary">efp</name>
    <name type="ordered locus">PTH_1162</name>
</gene>
<keyword id="KW-0963">Cytoplasm</keyword>
<keyword id="KW-0251">Elongation factor</keyword>
<keyword id="KW-0648">Protein biosynthesis</keyword>
<keyword id="KW-1185">Reference proteome</keyword>
<proteinExistence type="inferred from homology"/>
<accession>A5D339</accession>
<evidence type="ECO:0000255" key="1">
    <source>
        <dbReference type="HAMAP-Rule" id="MF_00141"/>
    </source>
</evidence>
<sequence>MISTNDFRTGLTIELEGEVYQVIEFQHVKPGKGAAFVRSKLRNMRTGAVIEKTFNAGEKIPRARIERREMQYLYSDGKEYNFMDMETYDQVTMSAAQLGDAVKYLKENMNIQVLLFQGKSIGVELPNFVELEVIDTTPGIKGDTASGGSKPATLETGAVVQVPFFVNVGDKLQIDTRTGNYIKRV</sequence>
<reference key="1">
    <citation type="journal article" date="2008" name="Genome Res.">
        <title>The genome of Pelotomaculum thermopropionicum reveals niche-associated evolution in anaerobic microbiota.</title>
        <authorList>
            <person name="Kosaka T."/>
            <person name="Kato S."/>
            <person name="Shimoyama T."/>
            <person name="Ishii S."/>
            <person name="Abe T."/>
            <person name="Watanabe K."/>
        </authorList>
    </citation>
    <scope>NUCLEOTIDE SEQUENCE [LARGE SCALE GENOMIC DNA]</scope>
    <source>
        <strain>DSM 13744 / JCM 10971 / SI</strain>
    </source>
</reference>
<organism>
    <name type="scientific">Pelotomaculum thermopropionicum (strain DSM 13744 / JCM 10971 / SI)</name>
    <dbReference type="NCBI Taxonomy" id="370438"/>
    <lineage>
        <taxon>Bacteria</taxon>
        <taxon>Bacillati</taxon>
        <taxon>Bacillota</taxon>
        <taxon>Clostridia</taxon>
        <taxon>Eubacteriales</taxon>
        <taxon>Desulfotomaculaceae</taxon>
        <taxon>Pelotomaculum</taxon>
    </lineage>
</organism>